<sequence length="61" mass="6977">MFTLKKTLLLLFFLGTINLSLCEEERNAEEERRDGDDEMDVEVKKRFITGLIGGLMKALGK</sequence>
<protein>
    <recommendedName>
        <fullName evidence="4">Temporin-SN2</fullName>
    </recommendedName>
</protein>
<evidence type="ECO:0000250" key="1">
    <source>
        <dbReference type="UniProtKB" id="E7EKJ7"/>
    </source>
</evidence>
<evidence type="ECO:0000255" key="2"/>
<evidence type="ECO:0000269" key="3">
    <source>
    </source>
</evidence>
<evidence type="ECO:0000303" key="4">
    <source>
    </source>
</evidence>
<evidence type="ECO:0000305" key="5"/>
<evidence type="ECO:0000305" key="6">
    <source>
    </source>
</evidence>
<evidence type="ECO:0000312" key="7">
    <source>
        <dbReference type="EMBL" id="ADV36196.1"/>
    </source>
</evidence>
<organism evidence="4">
    <name type="scientific">Sylvirana spinulosa</name>
    <name type="common">Fine-spined frog</name>
    <name type="synonym">Hylarana spinulosa</name>
    <dbReference type="NCBI Taxonomy" id="369515"/>
    <lineage>
        <taxon>Eukaryota</taxon>
        <taxon>Metazoa</taxon>
        <taxon>Chordata</taxon>
        <taxon>Craniata</taxon>
        <taxon>Vertebrata</taxon>
        <taxon>Euteleostomi</taxon>
        <taxon>Amphibia</taxon>
        <taxon>Batrachia</taxon>
        <taxon>Anura</taxon>
        <taxon>Neobatrachia</taxon>
        <taxon>Ranoidea</taxon>
        <taxon>Ranidae</taxon>
        <taxon>Sylvirana</taxon>
    </lineage>
</organism>
<accession>E7EKJ6</accession>
<dbReference type="EMBL" id="HQ735173">
    <property type="protein sequence ID" value="ADV36196.1"/>
    <property type="molecule type" value="mRNA"/>
</dbReference>
<dbReference type="GO" id="GO:0005576">
    <property type="term" value="C:extracellular region"/>
    <property type="evidence" value="ECO:0007669"/>
    <property type="project" value="UniProtKB-SubCell"/>
</dbReference>
<dbReference type="GO" id="GO:0050832">
    <property type="term" value="P:defense response to fungus"/>
    <property type="evidence" value="ECO:0000314"/>
    <property type="project" value="UniProtKB"/>
</dbReference>
<dbReference type="GO" id="GO:0050829">
    <property type="term" value="P:defense response to Gram-negative bacterium"/>
    <property type="evidence" value="ECO:0000314"/>
    <property type="project" value="UniProtKB"/>
</dbReference>
<dbReference type="GO" id="GO:0050830">
    <property type="term" value="P:defense response to Gram-positive bacterium"/>
    <property type="evidence" value="ECO:0000314"/>
    <property type="project" value="UniProtKB"/>
</dbReference>
<dbReference type="GO" id="GO:0031640">
    <property type="term" value="P:killing of cells of another organism"/>
    <property type="evidence" value="ECO:0007669"/>
    <property type="project" value="UniProtKB-KW"/>
</dbReference>
<dbReference type="InterPro" id="IPR004275">
    <property type="entry name" value="Frog_antimicrobial_propeptide"/>
</dbReference>
<dbReference type="Pfam" id="PF03032">
    <property type="entry name" value="FSAP_sig_propep"/>
    <property type="match status" value="1"/>
</dbReference>
<name>TP2_SYLSP</name>
<comment type="function">
    <text evidence="3">Antimicrobial peptide. Active against some Gram-positive and Gram-negative bacterial strains. Active against fungus C.glabrata 090902 but not against C.albicans ATCC 12231. Shows very weak hemolytic activity against human erythrocytes.</text>
</comment>
<comment type="subcellular location">
    <subcellularLocation>
        <location evidence="6">Secreted</location>
    </subcellularLocation>
</comment>
<comment type="tissue specificity">
    <text evidence="6">Expressed by the skin glands.</text>
</comment>
<comment type="similarity">
    <text evidence="5">Belongs to the frog skin active peptide (FSAP) family. Temporin subfamily.</text>
</comment>
<feature type="signal peptide" evidence="2">
    <location>
        <begin position="1"/>
        <end position="22"/>
    </location>
</feature>
<feature type="propeptide" id="PRO_0000439788" description="Removed in mature form" evidence="6">
    <location>
        <begin position="23"/>
        <end position="44"/>
    </location>
</feature>
<feature type="peptide" id="PRO_0000439789" description="Temporin-SN2" evidence="3">
    <location>
        <begin position="47"/>
        <end position="61"/>
    </location>
</feature>
<feature type="modified residue" description="Lysine amide" evidence="1">
    <location>
        <position position="61"/>
    </location>
</feature>
<reference evidence="7" key="1">
    <citation type="journal article" date="2013" name="Biochimie">
        <title>Identification of multiple antimicrobial peptides from the skin of fine-spined frog, Hylarana spinulosa (Ranidae).</title>
        <authorList>
            <person name="Yang X."/>
            <person name="Hu Y."/>
            <person name="Xu S."/>
            <person name="Hu Y."/>
            <person name="Meng H."/>
            <person name="Guo C."/>
            <person name="Liu Y."/>
            <person name="Liu J."/>
            <person name="Yu Z."/>
            <person name="Wang H."/>
        </authorList>
    </citation>
    <scope>NUCLEOTIDE SEQUENCE [MRNA]</scope>
    <scope>PROTEIN SEQUENCE OF 47-61</scope>
    <scope>FUNCTION</scope>
    <scope>SYNTHESIS</scope>
    <source>
        <tissue evidence="4">Skin</tissue>
    </source>
</reference>
<proteinExistence type="evidence at protein level"/>
<keyword id="KW-0027">Amidation</keyword>
<keyword id="KW-0878">Amphibian defense peptide</keyword>
<keyword id="KW-0044">Antibiotic</keyword>
<keyword id="KW-0929">Antimicrobial</keyword>
<keyword id="KW-0165">Cleavage on pair of basic residues</keyword>
<keyword id="KW-0204">Cytolysis</keyword>
<keyword id="KW-0903">Direct protein sequencing</keyword>
<keyword id="KW-0295">Fungicide</keyword>
<keyword id="KW-0354">Hemolysis</keyword>
<keyword id="KW-0964">Secreted</keyword>
<keyword id="KW-0732">Signal</keyword>